<organism>
    <name type="scientific">Chloroherpeton thalassium (strain ATCC 35110 / GB-78)</name>
    <dbReference type="NCBI Taxonomy" id="517418"/>
    <lineage>
        <taxon>Bacteria</taxon>
        <taxon>Pseudomonadati</taxon>
        <taxon>Chlorobiota</taxon>
        <taxon>Chlorobiia</taxon>
        <taxon>Chlorobiales</taxon>
        <taxon>Chloroherpetonaceae</taxon>
        <taxon>Chloroherpeton</taxon>
    </lineage>
</organism>
<comment type="function">
    <text evidence="1">One of the primary rRNA binding proteins, it binds directly to 16S rRNA where it nucleates assembly of the body of the 30S subunit.</text>
</comment>
<comment type="function">
    <text evidence="1">With S5 and S12 plays an important role in translational accuracy.</text>
</comment>
<comment type="subunit">
    <text evidence="1">Part of the 30S ribosomal subunit. Contacts protein S5. The interaction surface between S4 and S5 is involved in control of translational fidelity.</text>
</comment>
<comment type="similarity">
    <text evidence="1">Belongs to the universal ribosomal protein uS4 family.</text>
</comment>
<evidence type="ECO:0000255" key="1">
    <source>
        <dbReference type="HAMAP-Rule" id="MF_01306"/>
    </source>
</evidence>
<evidence type="ECO:0000305" key="2"/>
<proteinExistence type="inferred from homology"/>
<dbReference type="EMBL" id="CP001100">
    <property type="protein sequence ID" value="ACF13577.1"/>
    <property type="molecule type" value="Genomic_DNA"/>
</dbReference>
<dbReference type="RefSeq" id="WP_012499661.1">
    <property type="nucleotide sequence ID" value="NC_011026.1"/>
</dbReference>
<dbReference type="SMR" id="B3QYE9"/>
<dbReference type="STRING" id="517418.Ctha_1113"/>
<dbReference type="KEGG" id="cts:Ctha_1113"/>
<dbReference type="eggNOG" id="COG0522">
    <property type="taxonomic scope" value="Bacteria"/>
</dbReference>
<dbReference type="HOGENOM" id="CLU_092403_0_2_10"/>
<dbReference type="OrthoDB" id="9803672at2"/>
<dbReference type="Proteomes" id="UP000001208">
    <property type="component" value="Chromosome"/>
</dbReference>
<dbReference type="GO" id="GO:0015935">
    <property type="term" value="C:small ribosomal subunit"/>
    <property type="evidence" value="ECO:0007669"/>
    <property type="project" value="InterPro"/>
</dbReference>
<dbReference type="GO" id="GO:0019843">
    <property type="term" value="F:rRNA binding"/>
    <property type="evidence" value="ECO:0007669"/>
    <property type="project" value="UniProtKB-UniRule"/>
</dbReference>
<dbReference type="GO" id="GO:0003735">
    <property type="term" value="F:structural constituent of ribosome"/>
    <property type="evidence" value="ECO:0007669"/>
    <property type="project" value="InterPro"/>
</dbReference>
<dbReference type="GO" id="GO:0042274">
    <property type="term" value="P:ribosomal small subunit biogenesis"/>
    <property type="evidence" value="ECO:0007669"/>
    <property type="project" value="TreeGrafter"/>
</dbReference>
<dbReference type="GO" id="GO:0006412">
    <property type="term" value="P:translation"/>
    <property type="evidence" value="ECO:0007669"/>
    <property type="project" value="UniProtKB-UniRule"/>
</dbReference>
<dbReference type="CDD" id="cd00165">
    <property type="entry name" value="S4"/>
    <property type="match status" value="1"/>
</dbReference>
<dbReference type="FunFam" id="3.10.290.10:FF:000001">
    <property type="entry name" value="30S ribosomal protein S4"/>
    <property type="match status" value="1"/>
</dbReference>
<dbReference type="Gene3D" id="1.10.1050.10">
    <property type="entry name" value="Ribosomal Protein S4 Delta 41, Chain A, domain 1"/>
    <property type="match status" value="1"/>
</dbReference>
<dbReference type="Gene3D" id="3.10.290.10">
    <property type="entry name" value="RNA-binding S4 domain"/>
    <property type="match status" value="1"/>
</dbReference>
<dbReference type="HAMAP" id="MF_01306_B">
    <property type="entry name" value="Ribosomal_uS4_B"/>
    <property type="match status" value="1"/>
</dbReference>
<dbReference type="InterPro" id="IPR022801">
    <property type="entry name" value="Ribosomal_uS4"/>
</dbReference>
<dbReference type="InterPro" id="IPR005709">
    <property type="entry name" value="Ribosomal_uS4_bac-type"/>
</dbReference>
<dbReference type="InterPro" id="IPR001912">
    <property type="entry name" value="Ribosomal_uS4_N"/>
</dbReference>
<dbReference type="InterPro" id="IPR002942">
    <property type="entry name" value="S4_RNA-bd"/>
</dbReference>
<dbReference type="InterPro" id="IPR036986">
    <property type="entry name" value="S4_RNA-bd_sf"/>
</dbReference>
<dbReference type="NCBIfam" id="NF003717">
    <property type="entry name" value="PRK05327.1"/>
    <property type="match status" value="1"/>
</dbReference>
<dbReference type="NCBIfam" id="TIGR01017">
    <property type="entry name" value="rpsD_bact"/>
    <property type="match status" value="1"/>
</dbReference>
<dbReference type="PANTHER" id="PTHR11831">
    <property type="entry name" value="30S 40S RIBOSOMAL PROTEIN"/>
    <property type="match status" value="1"/>
</dbReference>
<dbReference type="PANTHER" id="PTHR11831:SF4">
    <property type="entry name" value="SMALL RIBOSOMAL SUBUNIT PROTEIN US4M"/>
    <property type="match status" value="1"/>
</dbReference>
<dbReference type="Pfam" id="PF00163">
    <property type="entry name" value="Ribosomal_S4"/>
    <property type="match status" value="1"/>
</dbReference>
<dbReference type="Pfam" id="PF01479">
    <property type="entry name" value="S4"/>
    <property type="match status" value="1"/>
</dbReference>
<dbReference type="SMART" id="SM01390">
    <property type="entry name" value="Ribosomal_S4"/>
    <property type="match status" value="1"/>
</dbReference>
<dbReference type="SMART" id="SM00363">
    <property type="entry name" value="S4"/>
    <property type="match status" value="1"/>
</dbReference>
<dbReference type="SUPFAM" id="SSF55174">
    <property type="entry name" value="Alpha-L RNA-binding motif"/>
    <property type="match status" value="1"/>
</dbReference>
<dbReference type="PROSITE" id="PS50889">
    <property type="entry name" value="S4"/>
    <property type="match status" value="1"/>
</dbReference>
<reference key="1">
    <citation type="submission" date="2008-06" db="EMBL/GenBank/DDBJ databases">
        <title>Complete sequence of Chloroherpeton thalassium ATCC 35110.</title>
        <authorList>
            <consortium name="US DOE Joint Genome Institute"/>
            <person name="Lucas S."/>
            <person name="Copeland A."/>
            <person name="Lapidus A."/>
            <person name="Glavina del Rio T."/>
            <person name="Dalin E."/>
            <person name="Tice H."/>
            <person name="Bruce D."/>
            <person name="Goodwin L."/>
            <person name="Pitluck S."/>
            <person name="Schmutz J."/>
            <person name="Larimer F."/>
            <person name="Land M."/>
            <person name="Hauser L."/>
            <person name="Kyrpides N."/>
            <person name="Mikhailova N."/>
            <person name="Liu Z."/>
            <person name="Li T."/>
            <person name="Zhao F."/>
            <person name="Overmann J."/>
            <person name="Bryant D.A."/>
            <person name="Richardson P."/>
        </authorList>
    </citation>
    <scope>NUCLEOTIDE SEQUENCE [LARGE SCALE GENOMIC DNA]</scope>
    <source>
        <strain>ATCC 35110 / GB-78</strain>
    </source>
</reference>
<name>RS4_CHLT3</name>
<sequence>MARFRGSITKVSRRLGVALAPKAEKYLGRRAYAPGQHGQSRKGKISEYALQLREKQKMKYIYGVLERQFRNYYKKAVSQRGVTGENLVKLLECRFDNVVFRAGFSPSRAGARQLVSHCHLRINGNKVNIPSYQVKPGDVIDFREKSRNMDAVRNSLNKTPDSRIPQWIQVDKANMKAVFLNVPERADIQEPYNEQLVVELYSK</sequence>
<feature type="chain" id="PRO_1000140707" description="Small ribosomal subunit protein uS4">
    <location>
        <begin position="1"/>
        <end position="203"/>
    </location>
</feature>
<feature type="domain" description="S4 RNA-binding" evidence="1">
    <location>
        <begin position="93"/>
        <end position="154"/>
    </location>
</feature>
<gene>
    <name evidence="1" type="primary">rpsD</name>
    <name type="ordered locus">Ctha_1113</name>
</gene>
<keyword id="KW-1185">Reference proteome</keyword>
<keyword id="KW-0687">Ribonucleoprotein</keyword>
<keyword id="KW-0689">Ribosomal protein</keyword>
<keyword id="KW-0694">RNA-binding</keyword>
<keyword id="KW-0699">rRNA-binding</keyword>
<accession>B3QYE9</accession>
<protein>
    <recommendedName>
        <fullName evidence="1">Small ribosomal subunit protein uS4</fullName>
    </recommendedName>
    <alternativeName>
        <fullName evidence="2">30S ribosomal protein S4</fullName>
    </alternativeName>
</protein>